<organism>
    <name type="scientific">Neisseria gonorrhoeae (strain NCCP11945)</name>
    <dbReference type="NCBI Taxonomy" id="521006"/>
    <lineage>
        <taxon>Bacteria</taxon>
        <taxon>Pseudomonadati</taxon>
        <taxon>Pseudomonadota</taxon>
        <taxon>Betaproteobacteria</taxon>
        <taxon>Neisseriales</taxon>
        <taxon>Neisseriaceae</taxon>
        <taxon>Neisseria</taxon>
    </lineage>
</organism>
<protein>
    <recommendedName>
        <fullName evidence="1">Small ribosomal subunit protein uS15</fullName>
    </recommendedName>
    <alternativeName>
        <fullName evidence="2">30S ribosomal protein S15</fullName>
    </alternativeName>
</protein>
<sequence length="89" mass="10386">MALTVEQKAQIVKDFQRKEGDTGSSEVQVALLTFRINDLTPHFKANPKDHHSRRGLLKMVSQRRRLLAYLRRTQPDTYRALITRLGLRK</sequence>
<keyword id="KW-0687">Ribonucleoprotein</keyword>
<keyword id="KW-0689">Ribosomal protein</keyword>
<keyword id="KW-0694">RNA-binding</keyword>
<keyword id="KW-0699">rRNA-binding</keyword>
<comment type="function">
    <text evidence="1">One of the primary rRNA binding proteins, it binds directly to 16S rRNA where it helps nucleate assembly of the platform of the 30S subunit by binding and bridging several RNA helices of the 16S rRNA.</text>
</comment>
<comment type="function">
    <text evidence="1">Forms an intersubunit bridge (bridge B4) with the 23S rRNA of the 50S subunit in the ribosome.</text>
</comment>
<comment type="subunit">
    <text evidence="1">Part of the 30S ribosomal subunit. Forms a bridge to the 50S subunit in the 70S ribosome, contacting the 23S rRNA.</text>
</comment>
<comment type="similarity">
    <text evidence="1">Belongs to the universal ribosomal protein uS15 family.</text>
</comment>
<accession>B4RJL0</accession>
<reference key="1">
    <citation type="journal article" date="2008" name="J. Bacteriol.">
        <title>Complete genome sequence of Neisseria gonorrhoeae NCCP11945.</title>
        <authorList>
            <person name="Chung G.T."/>
            <person name="Yoo J.S."/>
            <person name="Oh H.B."/>
            <person name="Lee Y.S."/>
            <person name="Cha S.H."/>
            <person name="Kim S.J."/>
            <person name="Yoo C.K."/>
        </authorList>
    </citation>
    <scope>NUCLEOTIDE SEQUENCE [LARGE SCALE GENOMIC DNA]</scope>
    <source>
        <strain>NCCP11945</strain>
    </source>
</reference>
<dbReference type="EMBL" id="CP001050">
    <property type="protein sequence ID" value="ACF29014.1"/>
    <property type="molecule type" value="Genomic_DNA"/>
</dbReference>
<dbReference type="RefSeq" id="WP_002217790.1">
    <property type="nucleotide sequence ID" value="NC_011035.1"/>
</dbReference>
<dbReference type="SMR" id="B4RJL0"/>
<dbReference type="GeneID" id="93386561"/>
<dbReference type="KEGG" id="ngk:NGK_0320"/>
<dbReference type="HOGENOM" id="CLU_148518_0_0_4"/>
<dbReference type="Proteomes" id="UP000002564">
    <property type="component" value="Chromosome"/>
</dbReference>
<dbReference type="GO" id="GO:0022627">
    <property type="term" value="C:cytosolic small ribosomal subunit"/>
    <property type="evidence" value="ECO:0007669"/>
    <property type="project" value="TreeGrafter"/>
</dbReference>
<dbReference type="GO" id="GO:0019843">
    <property type="term" value="F:rRNA binding"/>
    <property type="evidence" value="ECO:0007669"/>
    <property type="project" value="UniProtKB-UniRule"/>
</dbReference>
<dbReference type="GO" id="GO:0003735">
    <property type="term" value="F:structural constituent of ribosome"/>
    <property type="evidence" value="ECO:0007669"/>
    <property type="project" value="InterPro"/>
</dbReference>
<dbReference type="GO" id="GO:0006412">
    <property type="term" value="P:translation"/>
    <property type="evidence" value="ECO:0007669"/>
    <property type="project" value="UniProtKB-UniRule"/>
</dbReference>
<dbReference type="CDD" id="cd00353">
    <property type="entry name" value="Ribosomal_S15p_S13e"/>
    <property type="match status" value="1"/>
</dbReference>
<dbReference type="FunFam" id="1.10.287.10:FF:000002">
    <property type="entry name" value="30S ribosomal protein S15"/>
    <property type="match status" value="1"/>
</dbReference>
<dbReference type="Gene3D" id="6.10.250.3130">
    <property type="match status" value="1"/>
</dbReference>
<dbReference type="Gene3D" id="1.10.287.10">
    <property type="entry name" value="S15/NS1, RNA-binding"/>
    <property type="match status" value="1"/>
</dbReference>
<dbReference type="HAMAP" id="MF_01343_B">
    <property type="entry name" value="Ribosomal_uS15_B"/>
    <property type="match status" value="1"/>
</dbReference>
<dbReference type="InterPro" id="IPR000589">
    <property type="entry name" value="Ribosomal_uS15"/>
</dbReference>
<dbReference type="InterPro" id="IPR005290">
    <property type="entry name" value="Ribosomal_uS15_bac-type"/>
</dbReference>
<dbReference type="InterPro" id="IPR009068">
    <property type="entry name" value="uS15_NS1_RNA-bd_sf"/>
</dbReference>
<dbReference type="NCBIfam" id="TIGR00952">
    <property type="entry name" value="S15_bact"/>
    <property type="match status" value="1"/>
</dbReference>
<dbReference type="PANTHER" id="PTHR23321">
    <property type="entry name" value="RIBOSOMAL PROTEIN S15, BACTERIAL AND ORGANELLAR"/>
    <property type="match status" value="1"/>
</dbReference>
<dbReference type="PANTHER" id="PTHR23321:SF26">
    <property type="entry name" value="SMALL RIBOSOMAL SUBUNIT PROTEIN US15M"/>
    <property type="match status" value="1"/>
</dbReference>
<dbReference type="Pfam" id="PF00312">
    <property type="entry name" value="Ribosomal_S15"/>
    <property type="match status" value="1"/>
</dbReference>
<dbReference type="SMART" id="SM01387">
    <property type="entry name" value="Ribosomal_S15"/>
    <property type="match status" value="1"/>
</dbReference>
<dbReference type="SUPFAM" id="SSF47060">
    <property type="entry name" value="S15/NS1 RNA-binding domain"/>
    <property type="match status" value="1"/>
</dbReference>
<dbReference type="PROSITE" id="PS00362">
    <property type="entry name" value="RIBOSOMAL_S15"/>
    <property type="match status" value="1"/>
</dbReference>
<name>RS15_NEIG2</name>
<evidence type="ECO:0000255" key="1">
    <source>
        <dbReference type="HAMAP-Rule" id="MF_01343"/>
    </source>
</evidence>
<evidence type="ECO:0000305" key="2"/>
<gene>
    <name evidence="1" type="primary">rpsO</name>
    <name type="ordered locus">NGK_0320</name>
</gene>
<proteinExistence type="inferred from homology"/>
<feature type="chain" id="PRO_1000143145" description="Small ribosomal subunit protein uS15">
    <location>
        <begin position="1"/>
        <end position="89"/>
    </location>
</feature>